<organism>
    <name type="scientific">Serratia proteamaculans (strain 568)</name>
    <dbReference type="NCBI Taxonomy" id="399741"/>
    <lineage>
        <taxon>Bacteria</taxon>
        <taxon>Pseudomonadati</taxon>
        <taxon>Pseudomonadota</taxon>
        <taxon>Gammaproteobacteria</taxon>
        <taxon>Enterobacterales</taxon>
        <taxon>Yersiniaceae</taxon>
        <taxon>Serratia</taxon>
    </lineage>
</organism>
<reference key="1">
    <citation type="submission" date="2007-09" db="EMBL/GenBank/DDBJ databases">
        <title>Complete sequence of chromosome of Serratia proteamaculans 568.</title>
        <authorList>
            <consortium name="US DOE Joint Genome Institute"/>
            <person name="Copeland A."/>
            <person name="Lucas S."/>
            <person name="Lapidus A."/>
            <person name="Barry K."/>
            <person name="Glavina del Rio T."/>
            <person name="Dalin E."/>
            <person name="Tice H."/>
            <person name="Pitluck S."/>
            <person name="Chain P."/>
            <person name="Malfatti S."/>
            <person name="Shin M."/>
            <person name="Vergez L."/>
            <person name="Schmutz J."/>
            <person name="Larimer F."/>
            <person name="Land M."/>
            <person name="Hauser L."/>
            <person name="Kyrpides N."/>
            <person name="Kim E."/>
            <person name="Taghavi S."/>
            <person name="Newman L."/>
            <person name="Vangronsveld J."/>
            <person name="van der Lelie D."/>
            <person name="Richardson P."/>
        </authorList>
    </citation>
    <scope>NUCLEOTIDE SEQUENCE [LARGE SCALE GENOMIC DNA]</scope>
    <source>
        <strain>568</strain>
    </source>
</reference>
<sequence length="394" mass="43145">MSKEKFERSKPHVNVGTIGHVDHGKTTLTAAITTVLAKTYGGSARAFDQIDNAPEEKARGITINTSHVEYDTPSRHYAHVDCPGHADYVKNMITGAAQMDGAILVVAATDGPMPQTREHILLGRQVGVPFIIVFMNKCDMVDDEELLELVEMEVRELLSAYDFPGDDLPVVRGSALKALEGEAEWEAKIIELAGYLDSYIPEPERAIDKPFLLPIEDVFSISGRGTVVTGRVERGIVKVGEEVEIVGIKDTVKSTCTGVEMFRKLLDEGRAGENVGVLLRGIKREDIERGQVLAKPGSIKPHTKFDSEVYILSKEEGGRHTPFFKGYRPQFYFRTTDVTGTIELPEGVEMVMPGDNVNMVVTLIHPIAMDDGLRFAIREGGRTVGAGVVAKVIA</sequence>
<gene>
    <name evidence="2" type="primary">tuf2</name>
    <name type="ordered locus">Spro_4548</name>
</gene>
<name>EFTU2_SERP5</name>
<evidence type="ECO:0000250" key="1"/>
<evidence type="ECO:0000255" key="2">
    <source>
        <dbReference type="HAMAP-Rule" id="MF_00118"/>
    </source>
</evidence>
<dbReference type="EC" id="3.6.5.3" evidence="2"/>
<dbReference type="EMBL" id="CP000826">
    <property type="protein sequence ID" value="ABV43641.1"/>
    <property type="molecule type" value="Genomic_DNA"/>
</dbReference>
<dbReference type="SMR" id="A8GKK1"/>
<dbReference type="STRING" id="399741.Spro_4548"/>
<dbReference type="KEGG" id="spe:Spro_4548"/>
<dbReference type="eggNOG" id="COG0050">
    <property type="taxonomic scope" value="Bacteria"/>
</dbReference>
<dbReference type="HOGENOM" id="CLU_007265_0_2_6"/>
<dbReference type="OrthoDB" id="9803139at2"/>
<dbReference type="GO" id="GO:0005829">
    <property type="term" value="C:cytosol"/>
    <property type="evidence" value="ECO:0007669"/>
    <property type="project" value="TreeGrafter"/>
</dbReference>
<dbReference type="GO" id="GO:0005525">
    <property type="term" value="F:GTP binding"/>
    <property type="evidence" value="ECO:0007669"/>
    <property type="project" value="UniProtKB-UniRule"/>
</dbReference>
<dbReference type="GO" id="GO:0003924">
    <property type="term" value="F:GTPase activity"/>
    <property type="evidence" value="ECO:0007669"/>
    <property type="project" value="InterPro"/>
</dbReference>
<dbReference type="GO" id="GO:0097216">
    <property type="term" value="F:guanosine tetraphosphate binding"/>
    <property type="evidence" value="ECO:0007669"/>
    <property type="project" value="UniProtKB-ARBA"/>
</dbReference>
<dbReference type="GO" id="GO:0003746">
    <property type="term" value="F:translation elongation factor activity"/>
    <property type="evidence" value="ECO:0007669"/>
    <property type="project" value="UniProtKB-UniRule"/>
</dbReference>
<dbReference type="CDD" id="cd01884">
    <property type="entry name" value="EF_Tu"/>
    <property type="match status" value="1"/>
</dbReference>
<dbReference type="CDD" id="cd03697">
    <property type="entry name" value="EFTU_II"/>
    <property type="match status" value="1"/>
</dbReference>
<dbReference type="CDD" id="cd03707">
    <property type="entry name" value="EFTU_III"/>
    <property type="match status" value="1"/>
</dbReference>
<dbReference type="FunFam" id="2.40.30.10:FF:000001">
    <property type="entry name" value="Elongation factor Tu"/>
    <property type="match status" value="1"/>
</dbReference>
<dbReference type="FunFam" id="3.40.50.300:FF:000003">
    <property type="entry name" value="Elongation factor Tu"/>
    <property type="match status" value="1"/>
</dbReference>
<dbReference type="Gene3D" id="3.40.50.300">
    <property type="entry name" value="P-loop containing nucleotide triphosphate hydrolases"/>
    <property type="match status" value="1"/>
</dbReference>
<dbReference type="Gene3D" id="2.40.30.10">
    <property type="entry name" value="Translation factors"/>
    <property type="match status" value="2"/>
</dbReference>
<dbReference type="HAMAP" id="MF_00118_B">
    <property type="entry name" value="EF_Tu_B"/>
    <property type="match status" value="1"/>
</dbReference>
<dbReference type="InterPro" id="IPR041709">
    <property type="entry name" value="EF-Tu_GTP-bd"/>
</dbReference>
<dbReference type="InterPro" id="IPR050055">
    <property type="entry name" value="EF-Tu_GTPase"/>
</dbReference>
<dbReference type="InterPro" id="IPR004161">
    <property type="entry name" value="EFTu-like_2"/>
</dbReference>
<dbReference type="InterPro" id="IPR033720">
    <property type="entry name" value="EFTU_2"/>
</dbReference>
<dbReference type="InterPro" id="IPR031157">
    <property type="entry name" value="G_TR_CS"/>
</dbReference>
<dbReference type="InterPro" id="IPR027417">
    <property type="entry name" value="P-loop_NTPase"/>
</dbReference>
<dbReference type="InterPro" id="IPR005225">
    <property type="entry name" value="Small_GTP-bd"/>
</dbReference>
<dbReference type="InterPro" id="IPR000795">
    <property type="entry name" value="T_Tr_GTP-bd_dom"/>
</dbReference>
<dbReference type="InterPro" id="IPR009000">
    <property type="entry name" value="Transl_B-barrel_sf"/>
</dbReference>
<dbReference type="InterPro" id="IPR009001">
    <property type="entry name" value="Transl_elong_EF1A/Init_IF2_C"/>
</dbReference>
<dbReference type="InterPro" id="IPR004541">
    <property type="entry name" value="Transl_elong_EFTu/EF1A_bac/org"/>
</dbReference>
<dbReference type="InterPro" id="IPR004160">
    <property type="entry name" value="Transl_elong_EFTu/EF1A_C"/>
</dbReference>
<dbReference type="NCBIfam" id="TIGR00485">
    <property type="entry name" value="EF-Tu"/>
    <property type="match status" value="1"/>
</dbReference>
<dbReference type="NCBIfam" id="NF000766">
    <property type="entry name" value="PRK00049.1"/>
    <property type="match status" value="1"/>
</dbReference>
<dbReference type="NCBIfam" id="NF009372">
    <property type="entry name" value="PRK12735.1"/>
    <property type="match status" value="1"/>
</dbReference>
<dbReference type="NCBIfam" id="NF009373">
    <property type="entry name" value="PRK12736.1"/>
    <property type="match status" value="1"/>
</dbReference>
<dbReference type="NCBIfam" id="TIGR00231">
    <property type="entry name" value="small_GTP"/>
    <property type="match status" value="1"/>
</dbReference>
<dbReference type="PANTHER" id="PTHR43721:SF22">
    <property type="entry name" value="ELONGATION FACTOR TU, MITOCHONDRIAL"/>
    <property type="match status" value="1"/>
</dbReference>
<dbReference type="PANTHER" id="PTHR43721">
    <property type="entry name" value="ELONGATION FACTOR TU-RELATED"/>
    <property type="match status" value="1"/>
</dbReference>
<dbReference type="Pfam" id="PF00009">
    <property type="entry name" value="GTP_EFTU"/>
    <property type="match status" value="1"/>
</dbReference>
<dbReference type="Pfam" id="PF03144">
    <property type="entry name" value="GTP_EFTU_D2"/>
    <property type="match status" value="1"/>
</dbReference>
<dbReference type="Pfam" id="PF03143">
    <property type="entry name" value="GTP_EFTU_D3"/>
    <property type="match status" value="1"/>
</dbReference>
<dbReference type="PRINTS" id="PR00315">
    <property type="entry name" value="ELONGATNFCT"/>
</dbReference>
<dbReference type="SUPFAM" id="SSF50465">
    <property type="entry name" value="EF-Tu/eEF-1alpha/eIF2-gamma C-terminal domain"/>
    <property type="match status" value="1"/>
</dbReference>
<dbReference type="SUPFAM" id="SSF52540">
    <property type="entry name" value="P-loop containing nucleoside triphosphate hydrolases"/>
    <property type="match status" value="1"/>
</dbReference>
<dbReference type="SUPFAM" id="SSF50447">
    <property type="entry name" value="Translation proteins"/>
    <property type="match status" value="1"/>
</dbReference>
<dbReference type="PROSITE" id="PS00301">
    <property type="entry name" value="G_TR_1"/>
    <property type="match status" value="1"/>
</dbReference>
<dbReference type="PROSITE" id="PS51722">
    <property type="entry name" value="G_TR_2"/>
    <property type="match status" value="1"/>
</dbReference>
<feature type="chain" id="PRO_0000337517" description="Elongation factor Tu 2">
    <location>
        <begin position="1"/>
        <end position="394"/>
    </location>
</feature>
<feature type="domain" description="tr-type G">
    <location>
        <begin position="10"/>
        <end position="204"/>
    </location>
</feature>
<feature type="region of interest" description="G1" evidence="1">
    <location>
        <begin position="19"/>
        <end position="26"/>
    </location>
</feature>
<feature type="region of interest" description="G2" evidence="1">
    <location>
        <begin position="60"/>
        <end position="64"/>
    </location>
</feature>
<feature type="region of interest" description="G3" evidence="1">
    <location>
        <begin position="81"/>
        <end position="84"/>
    </location>
</feature>
<feature type="region of interest" description="G4" evidence="1">
    <location>
        <begin position="136"/>
        <end position="139"/>
    </location>
</feature>
<feature type="region of interest" description="G5" evidence="1">
    <location>
        <begin position="174"/>
        <end position="176"/>
    </location>
</feature>
<feature type="binding site" evidence="2">
    <location>
        <begin position="19"/>
        <end position="26"/>
    </location>
    <ligand>
        <name>GTP</name>
        <dbReference type="ChEBI" id="CHEBI:37565"/>
    </ligand>
</feature>
<feature type="binding site" evidence="2">
    <location>
        <position position="26"/>
    </location>
    <ligand>
        <name>Mg(2+)</name>
        <dbReference type="ChEBI" id="CHEBI:18420"/>
    </ligand>
</feature>
<feature type="binding site" evidence="2">
    <location>
        <begin position="81"/>
        <end position="85"/>
    </location>
    <ligand>
        <name>GTP</name>
        <dbReference type="ChEBI" id="CHEBI:37565"/>
    </ligand>
</feature>
<feature type="binding site" evidence="2">
    <location>
        <begin position="136"/>
        <end position="139"/>
    </location>
    <ligand>
        <name>GTP</name>
        <dbReference type="ChEBI" id="CHEBI:37565"/>
    </ligand>
</feature>
<keyword id="KW-0963">Cytoplasm</keyword>
<keyword id="KW-0251">Elongation factor</keyword>
<keyword id="KW-0342">GTP-binding</keyword>
<keyword id="KW-0378">Hydrolase</keyword>
<keyword id="KW-0460">Magnesium</keyword>
<keyword id="KW-0479">Metal-binding</keyword>
<keyword id="KW-0547">Nucleotide-binding</keyword>
<keyword id="KW-0648">Protein biosynthesis</keyword>
<comment type="function">
    <text evidence="2">GTP hydrolase that promotes the GTP-dependent binding of aminoacyl-tRNA to the A-site of ribosomes during protein biosynthesis.</text>
</comment>
<comment type="catalytic activity">
    <reaction evidence="2">
        <text>GTP + H2O = GDP + phosphate + H(+)</text>
        <dbReference type="Rhea" id="RHEA:19669"/>
        <dbReference type="ChEBI" id="CHEBI:15377"/>
        <dbReference type="ChEBI" id="CHEBI:15378"/>
        <dbReference type="ChEBI" id="CHEBI:37565"/>
        <dbReference type="ChEBI" id="CHEBI:43474"/>
        <dbReference type="ChEBI" id="CHEBI:58189"/>
        <dbReference type="EC" id="3.6.5.3"/>
    </reaction>
    <physiologicalReaction direction="left-to-right" evidence="2">
        <dbReference type="Rhea" id="RHEA:19670"/>
    </physiologicalReaction>
</comment>
<comment type="subunit">
    <text evidence="2">Monomer.</text>
</comment>
<comment type="subcellular location">
    <subcellularLocation>
        <location evidence="2">Cytoplasm</location>
    </subcellularLocation>
</comment>
<comment type="similarity">
    <text evidence="2">Belongs to the TRAFAC class translation factor GTPase superfamily. Classic translation factor GTPase family. EF-Tu/EF-1A subfamily.</text>
</comment>
<proteinExistence type="inferred from homology"/>
<protein>
    <recommendedName>
        <fullName evidence="2">Elongation factor Tu 2</fullName>
        <shortName evidence="2">EF-Tu 2</shortName>
        <ecNumber evidence="2">3.6.5.3</ecNumber>
    </recommendedName>
</protein>
<accession>A8GKK1</accession>